<evidence type="ECO:0000255" key="1">
    <source>
        <dbReference type="HAMAP-Rule" id="MF_00442"/>
    </source>
</evidence>
<evidence type="ECO:0000269" key="2">
    <source>
    </source>
</evidence>
<evidence type="ECO:0000269" key="3">
    <source ref="2"/>
</evidence>
<evidence type="ECO:0000303" key="4">
    <source>
    </source>
</evidence>
<evidence type="ECO:0000305" key="5"/>
<dbReference type="EC" id="5.6.2.4" evidence="1 3"/>
<dbReference type="EMBL" id="AM778123">
    <property type="protein sequence ID" value="CAO85626.1"/>
    <property type="molecule type" value="Genomic_DNA"/>
</dbReference>
<dbReference type="EMBL" id="CP001800">
    <property type="protein sequence ID" value="ACX90562.1"/>
    <property type="molecule type" value="Genomic_DNA"/>
</dbReference>
<dbReference type="RefSeq" id="WP_009988512.1">
    <property type="nucleotide sequence ID" value="NZ_ACUK01000013.1"/>
</dbReference>
<dbReference type="PDB" id="2VA8">
    <property type="method" value="X-ray"/>
    <property type="resolution" value="2.30 A"/>
    <property type="chains" value="A/B=1-715"/>
</dbReference>
<dbReference type="PDBsum" id="2VA8"/>
<dbReference type="SMR" id="D0KN27"/>
<dbReference type="GeneID" id="44128181"/>
<dbReference type="KEGG" id="sol:Ssol_0266"/>
<dbReference type="HOGENOM" id="CLU_006553_3_0_2"/>
<dbReference type="BRENDA" id="3.6.4.12">
    <property type="organism ID" value="6163"/>
</dbReference>
<dbReference type="GO" id="GO:0043138">
    <property type="term" value="F:3'-5' DNA helicase activity"/>
    <property type="evidence" value="ECO:0000314"/>
    <property type="project" value="UniProtKB"/>
</dbReference>
<dbReference type="GO" id="GO:0005524">
    <property type="term" value="F:ATP binding"/>
    <property type="evidence" value="ECO:0007669"/>
    <property type="project" value="UniProtKB-UniRule"/>
</dbReference>
<dbReference type="GO" id="GO:0016887">
    <property type="term" value="F:ATP hydrolysis activity"/>
    <property type="evidence" value="ECO:0007669"/>
    <property type="project" value="RHEA"/>
</dbReference>
<dbReference type="GO" id="GO:0003677">
    <property type="term" value="F:DNA binding"/>
    <property type="evidence" value="ECO:0007669"/>
    <property type="project" value="UniProtKB-UniRule"/>
</dbReference>
<dbReference type="GO" id="GO:0006281">
    <property type="term" value="P:DNA repair"/>
    <property type="evidence" value="ECO:0007669"/>
    <property type="project" value="UniProtKB-UniRule"/>
</dbReference>
<dbReference type="CDD" id="cd18028">
    <property type="entry name" value="DEXHc_archSki2"/>
    <property type="match status" value="1"/>
</dbReference>
<dbReference type="CDD" id="cd18795">
    <property type="entry name" value="SF2_C_Ski2"/>
    <property type="match status" value="1"/>
</dbReference>
<dbReference type="Gene3D" id="1.10.3380.30">
    <property type="match status" value="1"/>
</dbReference>
<dbReference type="Gene3D" id="1.10.150.20">
    <property type="entry name" value="5' to 3' exonuclease, C-terminal subdomain"/>
    <property type="match status" value="1"/>
</dbReference>
<dbReference type="Gene3D" id="3.40.50.300">
    <property type="entry name" value="P-loop containing nucleotide triphosphate hydrolases"/>
    <property type="match status" value="2"/>
</dbReference>
<dbReference type="HAMAP" id="MF_00442">
    <property type="entry name" value="Helicase_Hel308"/>
    <property type="match status" value="1"/>
</dbReference>
<dbReference type="InterPro" id="IPR011545">
    <property type="entry name" value="DEAD/DEAH_box_helicase_dom"/>
</dbReference>
<dbReference type="InterPro" id="IPR048772">
    <property type="entry name" value="Hel308-like_dom4"/>
</dbReference>
<dbReference type="InterPro" id="IPR053416">
    <property type="entry name" value="Hel308_helicase"/>
</dbReference>
<dbReference type="InterPro" id="IPR050474">
    <property type="entry name" value="Hel308_SKI2-like"/>
</dbReference>
<dbReference type="InterPro" id="IPR014001">
    <property type="entry name" value="Helicase_ATP-bd"/>
</dbReference>
<dbReference type="InterPro" id="IPR001650">
    <property type="entry name" value="Helicase_C-like"/>
</dbReference>
<dbReference type="InterPro" id="IPR022965">
    <property type="entry name" value="Helicase_Hel308"/>
</dbReference>
<dbReference type="InterPro" id="IPR027417">
    <property type="entry name" value="P-loop_NTPase"/>
</dbReference>
<dbReference type="InterPro" id="IPR036390">
    <property type="entry name" value="WH_DNA-bd_sf"/>
</dbReference>
<dbReference type="NCBIfam" id="NF040935">
    <property type="entry name" value="helicase_Hel308"/>
    <property type="match status" value="1"/>
</dbReference>
<dbReference type="PANTHER" id="PTHR47961:SF10">
    <property type="entry name" value="ATP-DEPENDENT DNA HELICASE HEL308"/>
    <property type="match status" value="1"/>
</dbReference>
<dbReference type="PANTHER" id="PTHR47961">
    <property type="entry name" value="DNA POLYMERASE THETA, PUTATIVE (AFU_ORTHOLOGUE AFUA_1G05260)-RELATED"/>
    <property type="match status" value="1"/>
</dbReference>
<dbReference type="Pfam" id="PF00270">
    <property type="entry name" value="DEAD"/>
    <property type="match status" value="1"/>
</dbReference>
<dbReference type="Pfam" id="PF00271">
    <property type="entry name" value="Helicase_C"/>
    <property type="match status" value="1"/>
</dbReference>
<dbReference type="Pfam" id="PF21280">
    <property type="entry name" value="Helicase_dom4_arc"/>
    <property type="match status" value="1"/>
</dbReference>
<dbReference type="SMART" id="SM00487">
    <property type="entry name" value="DEXDc"/>
    <property type="match status" value="1"/>
</dbReference>
<dbReference type="SMART" id="SM00490">
    <property type="entry name" value="HELICc"/>
    <property type="match status" value="1"/>
</dbReference>
<dbReference type="SUPFAM" id="SSF52540">
    <property type="entry name" value="P-loop containing nucleoside triphosphate hydrolases"/>
    <property type="match status" value="1"/>
</dbReference>
<dbReference type="SUPFAM" id="SSF158702">
    <property type="entry name" value="Sec63 N-terminal domain-like"/>
    <property type="match status" value="1"/>
</dbReference>
<dbReference type="SUPFAM" id="SSF46785">
    <property type="entry name" value="Winged helix' DNA-binding domain"/>
    <property type="match status" value="1"/>
</dbReference>
<dbReference type="PROSITE" id="PS51192">
    <property type="entry name" value="HELICASE_ATP_BIND_1"/>
    <property type="match status" value="1"/>
</dbReference>
<dbReference type="PROSITE" id="PS51194">
    <property type="entry name" value="HELICASE_CTER"/>
    <property type="match status" value="1"/>
</dbReference>
<dbReference type="PROSITE" id="PS51195">
    <property type="entry name" value="Q_MOTIF"/>
    <property type="match status" value="1"/>
</dbReference>
<sequence>MSLELEWMPIEDLKLPSNVIEIIKKRGIKKLNPPQTEAVKKGLLEGNRLLLTSPTGSGKTLIAEMGIISFLLKNGGKAIYVTPLRALTNEKYLTFKDWELIGFKVAMTSGDYDTDDAWLKNYDIIITTYEKLDSLWRHRPEWLNEVNYFVLDELHYLNDPERGPVVESVTIRAKRRNLLALSATISNYKQIAKWLGAEPVATNWRPVPLIEGVIYPERKKKEYNVIFKDNTTKKVHGDDAIIAYTLDSLSKNGQVLVFRNSRKMAESTALKIANYMNFVSLDENALSEILKQLDDIEEGGSDEKELLKSLISKGVAYHHAGLSKALRDLIEEGFRQRKIKVIVATPTLAAGVNLPARTVIIGDIYRFNKKIAGYYDEIPIMEYKQMSGRAGRPGFDQIGESIVVVRDKEDVDRVFKKYVLSDVEPIESKLGSERAFYTFLLGILSAEGNLSEKQLENFAYESLLAKQLVDVYFDRAIRWLLEHSFIKEEGNTFALTNFGKRVADLYINPFTADIIRKGLEGHKASCELAYLHLLAFTPDGPLVSVGRNEEEELIELLEDLDCELLIEEPYEEDEYSLYINALKVALIMKDWMDEVDEDTILSKYNIGSGDLRNMVETMDWLTYSAYHLSRELKLNEHADKLRILNLRVRDGIKEELLELVQISGVGRKRARLLYNNGIKELGDVVMNPDKVKNLLGQKLGEKVVQEAARLLNRFH</sequence>
<name>HELS_SACS9</name>
<gene>
    <name evidence="1 4" type="primary">hel308</name>
    <name type="ordered locus">Ssol_0266</name>
</gene>
<organism>
    <name type="scientific">Saccharolobus solfataricus (strain 98/2)</name>
    <name type="common">Sulfolobus solfataricus</name>
    <dbReference type="NCBI Taxonomy" id="555311"/>
    <lineage>
        <taxon>Archaea</taxon>
        <taxon>Thermoproteota</taxon>
        <taxon>Thermoprotei</taxon>
        <taxon>Sulfolobales</taxon>
        <taxon>Sulfolobaceae</taxon>
        <taxon>Saccharolobus</taxon>
    </lineage>
</organism>
<proteinExistence type="evidence at protein level"/>
<feature type="chain" id="PRO_0000429031" description="ATP-dependent DNA helicase Hel308">
    <location>
        <begin position="1"/>
        <end position="715"/>
    </location>
</feature>
<feature type="domain" description="Helicase ATP-binding" evidence="1">
    <location>
        <begin position="40"/>
        <end position="203"/>
    </location>
</feature>
<feature type="domain" description="Helicase C-terminal" evidence="1">
    <location>
        <begin position="236"/>
        <end position="442"/>
    </location>
</feature>
<feature type="short sequence motif" description="Q motif">
    <location>
        <begin position="8"/>
        <end position="36"/>
    </location>
</feature>
<feature type="short sequence motif" description="DEAH box" evidence="1">
    <location>
        <begin position="152"/>
        <end position="155"/>
    </location>
</feature>
<feature type="binding site" evidence="1">
    <location>
        <position position="35"/>
    </location>
    <ligand>
        <name>ATP</name>
        <dbReference type="ChEBI" id="CHEBI:30616"/>
    </ligand>
</feature>
<feature type="binding site" evidence="1">
    <location>
        <begin position="53"/>
        <end position="60"/>
    </location>
    <ligand>
        <name>ATP</name>
        <dbReference type="ChEBI" id="CHEBI:30616"/>
    </ligand>
</feature>
<feature type="mutagenesis site" description="No helicase activity. Wild-type binding to ss and dsDNA." evidence="2">
    <original>K</original>
    <variation>A</variation>
    <location>
        <position position="59"/>
    </location>
</feature>
<feature type="mutagenesis site" description="Significantly reduced helicase, 26-fold decreased binding to ssDNA." evidence="2">
    <original>R</original>
    <variation>A</variation>
    <location>
        <position position="262"/>
    </location>
</feature>
<feature type="mutagenesis site" description="Significantly reduced helicase, 6-fold decreased binding to ssDNA, wild-type binding to dsDNA." evidence="2">
    <original>R</original>
    <variation>A</variation>
    <location>
        <position position="327"/>
    </location>
</feature>
<feature type="mutagenesis site" description="Increased helicase on linear substrates and stalled replication fork, nearly wild-type binding to ss and dsDNA." evidence="2">
    <location>
        <begin position="653"/>
        <end position="715"/>
    </location>
</feature>
<feature type="mutagenesis site" description="Increased helicase, 3-fold decreased binding to ssDNA." evidence="2">
    <original>R</original>
    <variation>A</variation>
    <location>
        <position position="669"/>
    </location>
</feature>
<feature type="sequence conflict" description="In Ref. 1; CAO85626." evidence="5" ref="1">
    <original>S</original>
    <variation>G</variation>
    <location>
        <position position="2"/>
    </location>
</feature>
<keyword id="KW-0002">3D-structure</keyword>
<keyword id="KW-0067">ATP-binding</keyword>
<keyword id="KW-0227">DNA damage</keyword>
<keyword id="KW-0234">DNA repair</keyword>
<keyword id="KW-0238">DNA-binding</keyword>
<keyword id="KW-0347">Helicase</keyword>
<keyword id="KW-0378">Hydrolase</keyword>
<keyword id="KW-0413">Isomerase</keyword>
<keyword id="KW-0547">Nucleotide-binding</keyword>
<accession>D0KN27</accession>
<accession>A7WPA4</accession>
<reference key="1">
    <citation type="journal article" date="2008" name="J. Biol. Chem.">
        <title>Structure of the DNA repair helicase hel308 reveals DNA binding and autoinhibitory domains.</title>
        <authorList>
            <person name="Richards J.D."/>
            <person name="Johnson K.A."/>
            <person name="Liu H."/>
            <person name="McRobbie A.M."/>
            <person name="McMahon S."/>
            <person name="Oke M."/>
            <person name="Carter L."/>
            <person name="Naismith J.H."/>
            <person name="White M.F."/>
        </authorList>
    </citation>
    <scope>NUCLEOTIDE SEQUENCE [GENOMIC DNA]</scope>
    <scope>X-RAY CRYSTALLOGRAPHY (2.3 ANGSTROMS)</scope>
    <scope>FUNCTION AS A HELICASE</scope>
    <scope>CATALYTIC ACTIVITY</scope>
    <scope>SUBUNIT</scope>
    <scope>DOMAIN</scope>
    <scope>DNA-BINDING</scope>
    <scope>MUTAGENESIS OF LYS-59; ARG-262; ARG-327; ARG-669 AND 653-LYS--HIS-715</scope>
    <source>
        <strain>98/2 / PBL 2025</strain>
    </source>
</reference>
<reference key="2">
    <citation type="submission" date="2009-10" db="EMBL/GenBank/DDBJ databases">
        <title>Complete sequence of Sulfolobus solfataricus 98/2.</title>
        <authorList>
            <consortium name="US DOE Joint Genome Institute"/>
            <person name="Lucas S."/>
            <person name="Copeland A."/>
            <person name="Lapidus A."/>
            <person name="Glavina del Rio T."/>
            <person name="Tice H."/>
            <person name="Bruce D."/>
            <person name="Goodwin L."/>
            <person name="Pitluck S."/>
            <person name="Munk A.C."/>
            <person name="Brettin T."/>
            <person name="Detter J.C."/>
            <person name="Han C."/>
            <person name="Tapia R."/>
            <person name="Larimer F."/>
            <person name="Land M."/>
            <person name="Hauser L."/>
            <person name="Kyrpides N."/>
            <person name="Ovchinnikova G."/>
            <person name="Mead D."/>
        </authorList>
    </citation>
    <scope>NUCLEOTIDE SEQUENCE [LARGE SCALE GENOMIC DNA]</scope>
    <source>
        <strain>98/2</strain>
    </source>
</reference>
<comment type="function">
    <text evidence="1 2">DNA-dependent ATPase and 3'-5' DNA helicase that may be involved in repair of stalled replication forks. A low processivity 3'-5' helicase. Unwinds short dsDNA substrates with 3'-overhangs (25 bp dsDNA with 25 base overhang), less active on longer dsDNA substrates. Also unwinds the lagging strand of a stalled replication fork (but the leading strand was not tested). Binds ssDNA, but dsDNA about 35-fold less well. Able to displace streptavidin from biotinylated ssDNA, which is partially inhibited by DNA-binding proteins, suggesting it may play a role in stripping proteins from stalled replication forks.</text>
</comment>
<comment type="catalytic activity">
    <reaction evidence="1 3">
        <text>Couples ATP hydrolysis with the unwinding of duplex DNA by translocating in the 3'-5' direction.</text>
        <dbReference type="EC" id="5.6.2.4"/>
    </reaction>
</comment>
<comment type="catalytic activity">
    <reaction evidence="1 3">
        <text>ATP + H2O = ADP + phosphate + H(+)</text>
        <dbReference type="Rhea" id="RHEA:13065"/>
        <dbReference type="ChEBI" id="CHEBI:15377"/>
        <dbReference type="ChEBI" id="CHEBI:15378"/>
        <dbReference type="ChEBI" id="CHEBI:30616"/>
        <dbReference type="ChEBI" id="CHEBI:43474"/>
        <dbReference type="ChEBI" id="CHEBI:456216"/>
        <dbReference type="EC" id="5.6.2.4"/>
    </reaction>
</comment>
<comment type="subunit">
    <text evidence="1 2">Monomer.</text>
</comment>
<comment type="domain">
    <text evidence="2">Crystallizes with 5 domains; the first 4 form a ring through which ssDNA may pass (seen in A.fulgidus crystals). The C-terminal domain (654-715) lies perpendicular to the ring and is able to bind ssDNA, which may cause it to may act as a molecular brake, inhibiting helicase activity (PubMed:18056710).</text>
</comment>
<comment type="similarity">
    <text evidence="1">Belongs to the helicase family. Hel308 subfamily.</text>
</comment>
<protein>
    <recommendedName>
        <fullName evidence="1">ATP-dependent DNA helicase Hel308</fullName>
        <ecNumber evidence="1 3">5.6.2.4</ecNumber>
    </recommendedName>
    <alternativeName>
        <fullName evidence="1">DNA 3'-5' helicase Hel308</fullName>
    </alternativeName>
</protein>